<protein>
    <recommendedName>
        <fullName evidence="1">SsrA-binding protein</fullName>
    </recommendedName>
    <alternativeName>
        <fullName evidence="1">Small protein B</fullName>
    </alternativeName>
</protein>
<keyword id="KW-0963">Cytoplasm</keyword>
<keyword id="KW-1185">Reference proteome</keyword>
<keyword id="KW-0694">RNA-binding</keyword>
<gene>
    <name evidence="1" type="primary">smpB</name>
    <name type="ordered locus">Ppro_1314</name>
</gene>
<organism>
    <name type="scientific">Pelobacter propionicus (strain DSM 2379 / NBRC 103807 / OttBd1)</name>
    <dbReference type="NCBI Taxonomy" id="338966"/>
    <lineage>
        <taxon>Bacteria</taxon>
        <taxon>Pseudomonadati</taxon>
        <taxon>Thermodesulfobacteriota</taxon>
        <taxon>Desulfuromonadia</taxon>
        <taxon>Desulfuromonadales</taxon>
        <taxon>Desulfuromonadaceae</taxon>
        <taxon>Pelobacter</taxon>
    </lineage>
</organism>
<proteinExistence type="inferred from homology"/>
<reference key="1">
    <citation type="submission" date="2006-10" db="EMBL/GenBank/DDBJ databases">
        <title>Complete sequence of chromosome of Pelobacter propionicus DSM 2379.</title>
        <authorList>
            <consortium name="US DOE Joint Genome Institute"/>
            <person name="Copeland A."/>
            <person name="Lucas S."/>
            <person name="Lapidus A."/>
            <person name="Barry K."/>
            <person name="Detter J.C."/>
            <person name="Glavina del Rio T."/>
            <person name="Hammon N."/>
            <person name="Israni S."/>
            <person name="Dalin E."/>
            <person name="Tice H."/>
            <person name="Pitluck S."/>
            <person name="Saunders E."/>
            <person name="Brettin T."/>
            <person name="Bruce D."/>
            <person name="Han C."/>
            <person name="Tapia R."/>
            <person name="Schmutz J."/>
            <person name="Larimer F."/>
            <person name="Land M."/>
            <person name="Hauser L."/>
            <person name="Kyrpides N."/>
            <person name="Kim E."/>
            <person name="Lovley D."/>
            <person name="Richardson P."/>
        </authorList>
    </citation>
    <scope>NUCLEOTIDE SEQUENCE [LARGE SCALE GENOMIC DNA]</scope>
    <source>
        <strain>DSM 2379 / NBRC 103807 / OttBd1</strain>
    </source>
</reference>
<accession>A1ANL4</accession>
<comment type="function">
    <text evidence="1">Required for rescue of stalled ribosomes mediated by trans-translation. Binds to transfer-messenger RNA (tmRNA), required for stable association of tmRNA with ribosomes. tmRNA and SmpB together mimic tRNA shape, replacing the anticodon stem-loop with SmpB. tmRNA is encoded by the ssrA gene; the 2 termini fold to resemble tRNA(Ala) and it encodes a 'tag peptide', a short internal open reading frame. During trans-translation Ala-aminoacylated tmRNA acts like a tRNA, entering the A-site of stalled ribosomes, displacing the stalled mRNA. The ribosome then switches to translate the ORF on the tmRNA; the nascent peptide is terminated with the 'tag peptide' encoded by the tmRNA and targeted for degradation. The ribosome is freed to recommence translation, which seems to be the essential function of trans-translation.</text>
</comment>
<comment type="subcellular location">
    <subcellularLocation>
        <location evidence="1">Cytoplasm</location>
    </subcellularLocation>
    <text evidence="1">The tmRNA-SmpB complex associates with stalled 70S ribosomes.</text>
</comment>
<comment type="similarity">
    <text evidence="1">Belongs to the SmpB family.</text>
</comment>
<sequence>MGEKLICNNKKAYHDYFIEEKMEAGLVLLGTEVKSLRAGKANLNDSFMLVRDGEAFLHNLHISPYEFGNRQNHQADRNRKLLLHRKQIDRLYGRIREQGYSIVPLRMYFKDGLVKVEIGLAKGKKLYDKREDMKKKDSQRELSQALKSKNRE</sequence>
<name>SSRP_PELPD</name>
<feature type="chain" id="PRO_1000002102" description="SsrA-binding protein">
    <location>
        <begin position="1"/>
        <end position="152"/>
    </location>
</feature>
<feature type="region of interest" description="Disordered" evidence="2">
    <location>
        <begin position="129"/>
        <end position="152"/>
    </location>
</feature>
<feature type="compositionally biased region" description="Basic and acidic residues" evidence="2">
    <location>
        <begin position="129"/>
        <end position="140"/>
    </location>
</feature>
<feature type="compositionally biased region" description="Polar residues" evidence="2">
    <location>
        <begin position="141"/>
        <end position="152"/>
    </location>
</feature>
<dbReference type="EMBL" id="CP000482">
    <property type="protein sequence ID" value="ABK98934.1"/>
    <property type="molecule type" value="Genomic_DNA"/>
</dbReference>
<dbReference type="RefSeq" id="WP_011735236.1">
    <property type="nucleotide sequence ID" value="NC_008609.1"/>
</dbReference>
<dbReference type="SMR" id="A1ANL4"/>
<dbReference type="STRING" id="338966.Ppro_1314"/>
<dbReference type="KEGG" id="ppd:Ppro_1314"/>
<dbReference type="eggNOG" id="COG0691">
    <property type="taxonomic scope" value="Bacteria"/>
</dbReference>
<dbReference type="HOGENOM" id="CLU_108953_0_1_7"/>
<dbReference type="OrthoDB" id="9805462at2"/>
<dbReference type="Proteomes" id="UP000006732">
    <property type="component" value="Chromosome"/>
</dbReference>
<dbReference type="GO" id="GO:0005829">
    <property type="term" value="C:cytosol"/>
    <property type="evidence" value="ECO:0007669"/>
    <property type="project" value="TreeGrafter"/>
</dbReference>
<dbReference type="GO" id="GO:0003723">
    <property type="term" value="F:RNA binding"/>
    <property type="evidence" value="ECO:0007669"/>
    <property type="project" value="UniProtKB-UniRule"/>
</dbReference>
<dbReference type="GO" id="GO:0070929">
    <property type="term" value="P:trans-translation"/>
    <property type="evidence" value="ECO:0007669"/>
    <property type="project" value="UniProtKB-UniRule"/>
</dbReference>
<dbReference type="CDD" id="cd09294">
    <property type="entry name" value="SmpB"/>
    <property type="match status" value="1"/>
</dbReference>
<dbReference type="Gene3D" id="2.40.280.10">
    <property type="match status" value="1"/>
</dbReference>
<dbReference type="HAMAP" id="MF_00023">
    <property type="entry name" value="SmpB"/>
    <property type="match status" value="1"/>
</dbReference>
<dbReference type="InterPro" id="IPR023620">
    <property type="entry name" value="SmpB"/>
</dbReference>
<dbReference type="InterPro" id="IPR000037">
    <property type="entry name" value="SsrA-bd_prot"/>
</dbReference>
<dbReference type="InterPro" id="IPR020081">
    <property type="entry name" value="SsrA-bd_prot_CS"/>
</dbReference>
<dbReference type="NCBIfam" id="NF003843">
    <property type="entry name" value="PRK05422.1"/>
    <property type="match status" value="1"/>
</dbReference>
<dbReference type="NCBIfam" id="TIGR00086">
    <property type="entry name" value="smpB"/>
    <property type="match status" value="1"/>
</dbReference>
<dbReference type="PANTHER" id="PTHR30308:SF2">
    <property type="entry name" value="SSRA-BINDING PROTEIN"/>
    <property type="match status" value="1"/>
</dbReference>
<dbReference type="PANTHER" id="PTHR30308">
    <property type="entry name" value="TMRNA-BINDING COMPONENT OF TRANS-TRANSLATION TAGGING COMPLEX"/>
    <property type="match status" value="1"/>
</dbReference>
<dbReference type="Pfam" id="PF01668">
    <property type="entry name" value="SmpB"/>
    <property type="match status" value="1"/>
</dbReference>
<dbReference type="SUPFAM" id="SSF74982">
    <property type="entry name" value="Small protein B (SmpB)"/>
    <property type="match status" value="1"/>
</dbReference>
<dbReference type="PROSITE" id="PS01317">
    <property type="entry name" value="SSRP"/>
    <property type="match status" value="1"/>
</dbReference>
<evidence type="ECO:0000255" key="1">
    <source>
        <dbReference type="HAMAP-Rule" id="MF_00023"/>
    </source>
</evidence>
<evidence type="ECO:0000256" key="2">
    <source>
        <dbReference type="SAM" id="MobiDB-lite"/>
    </source>
</evidence>